<name>ARAA_ECOLI</name>
<proteinExistence type="evidence at protein level"/>
<gene>
    <name type="primary">araA</name>
    <name type="ordered locus">b0062</name>
    <name type="ordered locus">JW0061</name>
</gene>
<dbReference type="EC" id="5.3.1.4"/>
<dbReference type="EMBL" id="M15263">
    <property type="protein sequence ID" value="AAA23463.1"/>
    <property type="molecule type" value="Genomic_DNA"/>
</dbReference>
<dbReference type="EMBL" id="U00096">
    <property type="protein sequence ID" value="AAC73173.1"/>
    <property type="molecule type" value="Genomic_DNA"/>
</dbReference>
<dbReference type="EMBL" id="AP009048">
    <property type="protein sequence ID" value="BAB96631.2"/>
    <property type="molecule type" value="Genomic_DNA"/>
</dbReference>
<dbReference type="EMBL" id="X74279">
    <property type="protein sequence ID" value="CAA52340.1"/>
    <property type="molecule type" value="Genomic_DNA"/>
</dbReference>
<dbReference type="PIR" id="F64727">
    <property type="entry name" value="ISECAB"/>
</dbReference>
<dbReference type="RefSeq" id="NP_414604.1">
    <property type="nucleotide sequence ID" value="NC_000913.3"/>
</dbReference>
<dbReference type="RefSeq" id="WP_000151748.1">
    <property type="nucleotide sequence ID" value="NZ_SSZK01000004.1"/>
</dbReference>
<dbReference type="PDB" id="2AJT">
    <property type="method" value="X-ray"/>
    <property type="resolution" value="2.60 A"/>
    <property type="chains" value="A/B/C=1-500"/>
</dbReference>
<dbReference type="PDB" id="2HXG">
    <property type="method" value="X-ray"/>
    <property type="resolution" value="2.80 A"/>
    <property type="chains" value="A/B/C=1-500"/>
</dbReference>
<dbReference type="PDB" id="4F2D">
    <property type="method" value="X-ray"/>
    <property type="resolution" value="2.30 A"/>
    <property type="chains" value="A/B/C=1-500"/>
</dbReference>
<dbReference type="PDB" id="7CHL">
    <property type="method" value="X-ray"/>
    <property type="resolution" value="3.40 A"/>
    <property type="chains" value="A/B/C/D/E/F/G/H/I/J/K/L=285-382"/>
</dbReference>
<dbReference type="PDB" id="7CXO">
    <property type="method" value="X-ray"/>
    <property type="resolution" value="3.20 A"/>
    <property type="chains" value="A/B/C/D/E/F=285-382"/>
</dbReference>
<dbReference type="PDBsum" id="2AJT"/>
<dbReference type="PDBsum" id="2HXG"/>
<dbReference type="PDBsum" id="4F2D"/>
<dbReference type="PDBsum" id="7CHL"/>
<dbReference type="PDBsum" id="7CXO"/>
<dbReference type="SMR" id="P08202"/>
<dbReference type="BioGRID" id="4259464">
    <property type="interactions" value="5"/>
</dbReference>
<dbReference type="DIP" id="DIP-9123N"/>
<dbReference type="FunCoup" id="P08202">
    <property type="interactions" value="125"/>
</dbReference>
<dbReference type="IntAct" id="P08202">
    <property type="interactions" value="4"/>
</dbReference>
<dbReference type="STRING" id="511145.b0062"/>
<dbReference type="jPOST" id="P08202"/>
<dbReference type="PaxDb" id="511145-b0062"/>
<dbReference type="DNASU" id="947511"/>
<dbReference type="EnsemblBacteria" id="AAC73173">
    <property type="protein sequence ID" value="AAC73173"/>
    <property type="gene ID" value="b0062"/>
</dbReference>
<dbReference type="GeneID" id="947511"/>
<dbReference type="KEGG" id="ecj:JW0061"/>
<dbReference type="KEGG" id="eco:b0062"/>
<dbReference type="PATRIC" id="fig|1411691.4.peg.2221"/>
<dbReference type="EchoBASE" id="EB0050"/>
<dbReference type="eggNOG" id="COG2160">
    <property type="taxonomic scope" value="Bacteria"/>
</dbReference>
<dbReference type="HOGENOM" id="CLU_045663_0_0_6"/>
<dbReference type="InParanoid" id="P08202"/>
<dbReference type="OMA" id="LMEDYTY"/>
<dbReference type="OrthoDB" id="9765600at2"/>
<dbReference type="PhylomeDB" id="P08202"/>
<dbReference type="BioCyc" id="EcoCyc:ARABISOM-MONOMER"/>
<dbReference type="BioCyc" id="MetaCyc:ARABISOM-MONOMER"/>
<dbReference type="BRENDA" id="5.3.1.4">
    <property type="organism ID" value="2026"/>
</dbReference>
<dbReference type="UniPathway" id="UPA00145">
    <property type="reaction ID" value="UER00565"/>
</dbReference>
<dbReference type="EvolutionaryTrace" id="P08202"/>
<dbReference type="PRO" id="PR:P08202"/>
<dbReference type="Proteomes" id="UP000000625">
    <property type="component" value="Chromosome"/>
</dbReference>
<dbReference type="GO" id="GO:0005829">
    <property type="term" value="C:cytosol"/>
    <property type="evidence" value="ECO:0000314"/>
    <property type="project" value="EcoCyc"/>
</dbReference>
<dbReference type="GO" id="GO:0008733">
    <property type="term" value="F:L-arabinose isomerase activity"/>
    <property type="evidence" value="ECO:0000314"/>
    <property type="project" value="EcoCyc"/>
</dbReference>
<dbReference type="GO" id="GO:0030145">
    <property type="term" value="F:manganese ion binding"/>
    <property type="evidence" value="ECO:0007669"/>
    <property type="project" value="UniProtKB-UniRule"/>
</dbReference>
<dbReference type="GO" id="GO:0019568">
    <property type="term" value="P:arabinose catabolic process"/>
    <property type="evidence" value="ECO:0000315"/>
    <property type="project" value="EcoliWiki"/>
</dbReference>
<dbReference type="GO" id="GO:0019569">
    <property type="term" value="P:L-arabinose catabolic process to xylulose 5-phosphate"/>
    <property type="evidence" value="ECO:0000315"/>
    <property type="project" value="EcoCyc"/>
</dbReference>
<dbReference type="CDD" id="cd03557">
    <property type="entry name" value="L-arabinose_isomerase"/>
    <property type="match status" value="1"/>
</dbReference>
<dbReference type="FunFam" id="3.40.50.10940:FF:000001">
    <property type="entry name" value="L-arabinose isomerase"/>
    <property type="match status" value="1"/>
</dbReference>
<dbReference type="Gene3D" id="3.40.50.10940">
    <property type="match status" value="1"/>
</dbReference>
<dbReference type="HAMAP" id="MF_00519">
    <property type="entry name" value="Arabinose_Isome"/>
    <property type="match status" value="1"/>
</dbReference>
<dbReference type="InterPro" id="IPR024664">
    <property type="entry name" value="Ara_Isoase_C"/>
</dbReference>
<dbReference type="InterPro" id="IPR055390">
    <property type="entry name" value="AraA_central"/>
</dbReference>
<dbReference type="InterPro" id="IPR055389">
    <property type="entry name" value="AraA_N"/>
</dbReference>
<dbReference type="InterPro" id="IPR038583">
    <property type="entry name" value="AraA_N_sf"/>
</dbReference>
<dbReference type="InterPro" id="IPR004216">
    <property type="entry name" value="Fuc/Ara_isomerase_C"/>
</dbReference>
<dbReference type="InterPro" id="IPR009015">
    <property type="entry name" value="Fucose_isomerase_N/cen_sf"/>
</dbReference>
<dbReference type="InterPro" id="IPR003762">
    <property type="entry name" value="Lara_isomerase"/>
</dbReference>
<dbReference type="NCBIfam" id="NF002795">
    <property type="entry name" value="PRK02929.1"/>
    <property type="match status" value="1"/>
</dbReference>
<dbReference type="PANTHER" id="PTHR38464">
    <property type="entry name" value="L-ARABINOSE ISOMERASE"/>
    <property type="match status" value="1"/>
</dbReference>
<dbReference type="PANTHER" id="PTHR38464:SF1">
    <property type="entry name" value="L-ARABINOSE ISOMERASE"/>
    <property type="match status" value="1"/>
</dbReference>
<dbReference type="Pfam" id="PF24856">
    <property type="entry name" value="AraA_central"/>
    <property type="match status" value="1"/>
</dbReference>
<dbReference type="Pfam" id="PF02610">
    <property type="entry name" value="AraA_N"/>
    <property type="match status" value="1"/>
</dbReference>
<dbReference type="Pfam" id="PF11762">
    <property type="entry name" value="Arabinose_Iso_C"/>
    <property type="match status" value="1"/>
</dbReference>
<dbReference type="PIRSF" id="PIRSF001478">
    <property type="entry name" value="L-ara_isomerase"/>
    <property type="match status" value="1"/>
</dbReference>
<dbReference type="SUPFAM" id="SSF50443">
    <property type="entry name" value="FucI/AraA C-terminal domain-like"/>
    <property type="match status" value="1"/>
</dbReference>
<dbReference type="SUPFAM" id="SSF53743">
    <property type="entry name" value="FucI/AraA N-terminal and middle domains"/>
    <property type="match status" value="1"/>
</dbReference>
<sequence length="500" mass="56074">MTIFDNYEVWFVIGSQHLYGPETLRQVTQHAEHVVNALNTEAKLPCKLVLKPLGTTPDEITAICRDANYDDRCAGLVVWLHTFSPAKMWINGLTMLNKPLLQFHTQFNAALPWDSIDMDFMNLNQTAHGGREFGFIGARMRQQHAVVTGHWQDKQAHERIGSWMRQAVSKQDTRHLKVCRFGDNMREVAVTDGDKVAAQIKFGFSVNTWAVGDLVQVVNSISDGDVNALVDEYESCYTMTPATQIHGKKRQNVLEAARIELGMKRFLEQGGFHAFTTTFEDLHGLKQLPGLAVQRLMQQGYGFAGEGDWKTAALLRIMKVMSTGLQGGTSFMEDYTYHFEKGNDLVLGSHMLEVCPSIAAEEKPILDVQHLGIGGKDDPARLIFNTQTGPAIVASLIDLGDRYRLLVNCIDTVKTPHSLPKLPVANALWKAQPDLPTASEAWILAGGAHHTVFSHALNLNDMRQFAEMHDIEITVIDNDTRLPAFKDALRWNEVYYGFRR</sequence>
<evidence type="ECO:0000269" key="1">
    <source>
    </source>
</evidence>
<evidence type="ECO:0000269" key="2">
    <source>
    </source>
</evidence>
<evidence type="ECO:0000269" key="3">
    <source>
    </source>
</evidence>
<evidence type="ECO:0000269" key="4">
    <source ref="10"/>
</evidence>
<evidence type="ECO:0000305" key="5"/>
<evidence type="ECO:0007829" key="6">
    <source>
        <dbReference type="PDB" id="2AJT"/>
    </source>
</evidence>
<evidence type="ECO:0007829" key="7">
    <source>
        <dbReference type="PDB" id="4F2D"/>
    </source>
</evidence>
<organism>
    <name type="scientific">Escherichia coli (strain K12)</name>
    <dbReference type="NCBI Taxonomy" id="83333"/>
    <lineage>
        <taxon>Bacteria</taxon>
        <taxon>Pseudomonadati</taxon>
        <taxon>Pseudomonadota</taxon>
        <taxon>Gammaproteobacteria</taxon>
        <taxon>Enterobacterales</taxon>
        <taxon>Enterobacteriaceae</taxon>
        <taxon>Escherichia</taxon>
    </lineage>
</organism>
<keyword id="KW-0002">3D-structure</keyword>
<keyword id="KW-0054">Arabinose catabolism</keyword>
<keyword id="KW-0119">Carbohydrate metabolism</keyword>
<keyword id="KW-0413">Isomerase</keyword>
<keyword id="KW-0464">Manganese</keyword>
<keyword id="KW-0479">Metal-binding</keyword>
<keyword id="KW-1185">Reference proteome</keyword>
<accession>P08202</accession>
<accession>P78040</accession>
<reference key="1">
    <citation type="journal article" date="1986" name="Gene">
        <title>The organization of the araBAD operon of Escherichia coli.</title>
        <authorList>
            <person name="Lee N."/>
            <person name="Gielow W."/>
            <person name="Martin R."/>
            <person name="Hamilton E."/>
            <person name="Fowler A."/>
        </authorList>
    </citation>
    <scope>NUCLEOTIDE SEQUENCE [GENOMIC DNA]</scope>
</reference>
<reference key="2">
    <citation type="journal article" date="1992" name="Nucleic Acids Res.">
        <title>Systematic sequencing of the Escherichia coli genome: analysis of the 0-2.4 min region.</title>
        <authorList>
            <person name="Yura T."/>
            <person name="Mori H."/>
            <person name="Nagai H."/>
            <person name="Nagata T."/>
            <person name="Ishihama A."/>
            <person name="Fujita N."/>
            <person name="Isono K."/>
            <person name="Mizobuchi K."/>
            <person name="Nakata A."/>
        </authorList>
    </citation>
    <scope>NUCLEOTIDE SEQUENCE [LARGE SCALE GENOMIC DNA]</scope>
    <source>
        <strain>K12</strain>
    </source>
</reference>
<reference key="3">
    <citation type="journal article" date="1997" name="Science">
        <title>The complete genome sequence of Escherichia coli K-12.</title>
        <authorList>
            <person name="Blattner F.R."/>
            <person name="Plunkett G. III"/>
            <person name="Bloch C.A."/>
            <person name="Perna N.T."/>
            <person name="Burland V."/>
            <person name="Riley M."/>
            <person name="Collado-Vides J."/>
            <person name="Glasner J.D."/>
            <person name="Rode C.K."/>
            <person name="Mayhew G.F."/>
            <person name="Gregor J."/>
            <person name="Davis N.W."/>
            <person name="Kirkpatrick H.A."/>
            <person name="Goeden M.A."/>
            <person name="Rose D.J."/>
            <person name="Mau B."/>
            <person name="Shao Y."/>
        </authorList>
    </citation>
    <scope>NUCLEOTIDE SEQUENCE [LARGE SCALE GENOMIC DNA]</scope>
    <source>
        <strain>K12 / MG1655 / ATCC 47076</strain>
    </source>
</reference>
<reference key="4">
    <citation type="journal article" date="2006" name="Mol. Syst. Biol.">
        <title>Highly accurate genome sequences of Escherichia coli K-12 strains MG1655 and W3110.</title>
        <authorList>
            <person name="Hayashi K."/>
            <person name="Morooka N."/>
            <person name="Yamamoto Y."/>
            <person name="Fujita K."/>
            <person name="Isono K."/>
            <person name="Choi S."/>
            <person name="Ohtsubo E."/>
            <person name="Baba T."/>
            <person name="Wanner B.L."/>
            <person name="Mori H."/>
            <person name="Horiuchi T."/>
        </authorList>
    </citation>
    <scope>NUCLEOTIDE SEQUENCE [LARGE SCALE GENOMIC DNA]</scope>
    <scope>SEQUENCE REVISION TO 72; 248 AND 360</scope>
    <source>
        <strain>K12 / W3110 / ATCC 27325 / DSM 5911</strain>
    </source>
</reference>
<reference key="5">
    <citation type="submission" date="1993-07" db="EMBL/GenBank/DDBJ databases">
        <authorList>
            <person name="Bachellier S."/>
            <person name="Saurin W."/>
            <person name="Perrin D."/>
            <person name="Hofnung M."/>
            <person name="Gilson E."/>
        </authorList>
    </citation>
    <scope>NUCLEOTIDE SEQUENCE [GENOMIC DNA] OF 458-500</scope>
</reference>
<reference key="6">
    <citation type="journal article" date="1977" name="Cell">
        <title>The araC promoter: transcription, mapping and interaction with the araBAD promoter.</title>
        <authorList>
            <person name="Hirsh J."/>
            <person name="Schleif R."/>
        </authorList>
    </citation>
    <scope>INDUCTION</scope>
</reference>
<reference key="7">
    <citation type="journal article" date="1987" name="Proc. Natl. Acad. Sci. U.S.A.">
        <title>Arabinose-induced binding of AraC protein to araI2 activates the araBAD operon promoter.</title>
        <authorList>
            <person name="Lee N."/>
            <person name="Francklyn C."/>
            <person name="Hamilton E.P."/>
        </authorList>
    </citation>
    <scope>INDUCTION</scope>
</reference>
<reference key="8">
    <citation type="journal article" date="1997" name="Electrophoresis">
        <title>Escherichia coli proteome analysis using the gene-protein database.</title>
        <authorList>
            <person name="VanBogelen R.A."/>
            <person name="Abshire K.Z."/>
            <person name="Moldover B."/>
            <person name="Olson E.R."/>
            <person name="Neidhardt F.C."/>
        </authorList>
    </citation>
    <scope>IDENTIFICATION BY 2D-GEL</scope>
</reference>
<reference key="9">
    <citation type="journal article" date="2006" name="J. Mol. Biol.">
        <title>Crystal structure of Escherichia coli L-arabinose isomerase (ECAI), the putative target of biological tagatose production.</title>
        <authorList>
            <person name="Manjasetty B.A."/>
            <person name="Chance M.R."/>
        </authorList>
    </citation>
    <scope>X-RAY CRYSTALLOGRAPHY (2.6 ANGSTROMS)</scope>
    <scope>SUBUNIT</scope>
</reference>
<reference key="10">
    <citation type="submission" date="2007-10" db="PDB data bank">
        <title>Crystal structure of Mn2+-bound Escherichia coli L-arabinose isomerase (ECAI) and implications in protein catalytic mechanism and thermo-stability.</title>
        <authorList>
            <person name="Zhu W."/>
            <person name="Chance M.R."/>
            <person name="Manjasetty B.A."/>
        </authorList>
    </citation>
    <scope>X-RAY CRYSTALLOGRAPHY (2.80 ANGSTROMS) IN COMPLEX WITH MANGANESE IONS</scope>
</reference>
<comment type="function">
    <text>Catalyzes the conversion of L-arabinose to L-ribulose.</text>
</comment>
<comment type="catalytic activity">
    <reaction>
        <text>beta-L-arabinopyranose = L-ribulose</text>
        <dbReference type="Rhea" id="RHEA:14821"/>
        <dbReference type="ChEBI" id="CHEBI:16880"/>
        <dbReference type="ChEBI" id="CHEBI:40886"/>
        <dbReference type="EC" id="5.3.1.4"/>
    </reaction>
</comment>
<comment type="cofactor">
    <cofactor>
        <name>Mn(2+)</name>
        <dbReference type="ChEBI" id="CHEBI:29035"/>
    </cofactor>
    <text>Binds 1 Mn(2+) ion per subunit.</text>
</comment>
<comment type="pathway">
    <text>Carbohydrate degradation; L-arabinose degradation via L-ribulose; D-xylulose 5-phosphate from L-arabinose (bacterial route): step 1/3.</text>
</comment>
<comment type="subunit">
    <text evidence="1 4">Homohexamer.</text>
</comment>
<comment type="induction">
    <text evidence="2 3">Induced by arabinose. Transcription is dependent on the transcription factor AraC, the cAMP receptor protein (CRP) and cAMP.</text>
</comment>
<comment type="similarity">
    <text evidence="5">Belongs to the arabinose isomerase family.</text>
</comment>
<protein>
    <recommendedName>
        <fullName>L-arabinose isomerase</fullName>
        <ecNumber>5.3.1.4</ecNumber>
    </recommendedName>
</protein>
<feature type="chain" id="PRO_0000198385" description="L-arabinose isomerase">
    <location>
        <begin position="1"/>
        <end position="500"/>
    </location>
</feature>
<feature type="binding site">
    <location>
        <position position="306"/>
    </location>
    <ligand>
        <name>Mn(2+)</name>
        <dbReference type="ChEBI" id="CHEBI:29035"/>
    </ligand>
</feature>
<feature type="binding site">
    <location>
        <position position="333"/>
    </location>
    <ligand>
        <name>Mn(2+)</name>
        <dbReference type="ChEBI" id="CHEBI:29035"/>
    </ligand>
</feature>
<feature type="binding site">
    <location>
        <position position="350"/>
    </location>
    <ligand>
        <name>Mn(2+)</name>
        <dbReference type="ChEBI" id="CHEBI:29035"/>
    </ligand>
</feature>
<feature type="binding site">
    <location>
        <position position="450"/>
    </location>
    <ligand>
        <name>Mn(2+)</name>
        <dbReference type="ChEBI" id="CHEBI:29035"/>
    </ligand>
</feature>
<feature type="sequence conflict" description="In Ref. 1; AAA23463." evidence="5" ref="1">
    <original>R</original>
    <variation>P</variation>
    <location>
        <position position="72"/>
    </location>
</feature>
<feature type="sequence conflict" description="In Ref. 1; AAA23463." evidence="5" ref="1">
    <original>K</original>
    <variation>E</variation>
    <location>
        <position position="248"/>
    </location>
</feature>
<feature type="sequence conflict" description="In Ref. 1; AAA23463." evidence="5" ref="1">
    <original>A</original>
    <variation>V</variation>
    <location>
        <position position="360"/>
    </location>
</feature>
<feature type="helix" evidence="7">
    <location>
        <begin position="3"/>
        <end position="6"/>
    </location>
</feature>
<feature type="strand" evidence="7">
    <location>
        <begin position="8"/>
        <end position="14"/>
    </location>
</feature>
<feature type="strand" evidence="7">
    <location>
        <begin position="17"/>
        <end position="19"/>
    </location>
</feature>
<feature type="helix" evidence="7">
    <location>
        <begin position="23"/>
        <end position="41"/>
    </location>
</feature>
<feature type="strand" evidence="7">
    <location>
        <begin position="45"/>
        <end position="50"/>
    </location>
</feature>
<feature type="helix" evidence="7">
    <location>
        <begin position="57"/>
        <end position="69"/>
    </location>
</feature>
<feature type="strand" evidence="7">
    <location>
        <begin position="73"/>
        <end position="79"/>
    </location>
</feature>
<feature type="helix" evidence="7">
    <location>
        <begin position="87"/>
        <end position="95"/>
    </location>
</feature>
<feature type="strand" evidence="7">
    <location>
        <begin position="100"/>
        <end position="104"/>
    </location>
</feature>
<feature type="strand" evidence="6">
    <location>
        <begin position="107"/>
        <end position="110"/>
    </location>
</feature>
<feature type="turn" evidence="7">
    <location>
        <begin position="113"/>
        <end position="115"/>
    </location>
</feature>
<feature type="helix" evidence="7">
    <location>
        <begin position="118"/>
        <end position="123"/>
    </location>
</feature>
<feature type="helix" evidence="7">
    <location>
        <begin position="126"/>
        <end position="139"/>
    </location>
</feature>
<feature type="strand" evidence="7">
    <location>
        <begin position="144"/>
        <end position="149"/>
    </location>
</feature>
<feature type="helix" evidence="7">
    <location>
        <begin position="154"/>
        <end position="173"/>
    </location>
</feature>
<feature type="strand" evidence="7">
    <location>
        <begin position="177"/>
        <end position="182"/>
    </location>
</feature>
<feature type="helix" evidence="7">
    <location>
        <begin position="195"/>
        <end position="202"/>
    </location>
</feature>
<feature type="strand" evidence="7">
    <location>
        <begin position="205"/>
        <end position="209"/>
    </location>
</feature>
<feature type="helix" evidence="7">
    <location>
        <begin position="211"/>
        <end position="219"/>
    </location>
</feature>
<feature type="helix" evidence="7">
    <location>
        <begin position="223"/>
        <end position="236"/>
    </location>
</feature>
<feature type="strand" evidence="7">
    <location>
        <begin position="237"/>
        <end position="239"/>
    </location>
</feature>
<feature type="helix" evidence="7">
    <location>
        <begin position="241"/>
        <end position="243"/>
    </location>
</feature>
<feature type="helix" evidence="7">
    <location>
        <begin position="250"/>
        <end position="270"/>
    </location>
</feature>
<feature type="strand" evidence="7">
    <location>
        <begin position="273"/>
        <end position="276"/>
    </location>
</feature>
<feature type="helix" evidence="7">
    <location>
        <begin position="291"/>
        <end position="298"/>
    </location>
</feature>
<feature type="strand" evidence="7">
    <location>
        <begin position="302"/>
        <end position="305"/>
    </location>
</feature>
<feature type="helix" evidence="7">
    <location>
        <begin position="309"/>
        <end position="321"/>
    </location>
</feature>
<feature type="turn" evidence="7">
    <location>
        <begin position="322"/>
        <end position="324"/>
    </location>
</feature>
<feature type="strand" evidence="7">
    <location>
        <begin position="325"/>
        <end position="327"/>
    </location>
</feature>
<feature type="strand" evidence="7">
    <location>
        <begin position="329"/>
        <end position="338"/>
    </location>
</feature>
<feature type="strand" evidence="7">
    <location>
        <begin position="345"/>
        <end position="349"/>
    </location>
</feature>
<feature type="helix" evidence="7">
    <location>
        <begin position="356"/>
        <end position="358"/>
    </location>
</feature>
<feature type="strand" evidence="7">
    <location>
        <begin position="361"/>
        <end position="363"/>
    </location>
</feature>
<feature type="strand" evidence="7">
    <location>
        <begin position="365"/>
        <end position="368"/>
    </location>
</feature>
<feature type="turn" evidence="7">
    <location>
        <begin position="372"/>
        <end position="375"/>
    </location>
</feature>
<feature type="strand" evidence="7">
    <location>
        <begin position="380"/>
        <end position="383"/>
    </location>
</feature>
<feature type="strand" evidence="7">
    <location>
        <begin position="389"/>
        <end position="398"/>
    </location>
</feature>
<feature type="strand" evidence="7">
    <location>
        <begin position="400"/>
        <end position="412"/>
    </location>
</feature>
<feature type="strand" evidence="7">
    <location>
        <begin position="427"/>
        <end position="433"/>
    </location>
</feature>
<feature type="helix" evidence="7">
    <location>
        <begin position="435"/>
        <end position="444"/>
    </location>
</feature>
<feature type="strand" evidence="7">
    <location>
        <begin position="449"/>
        <end position="456"/>
    </location>
</feature>
<feature type="helix" evidence="7">
    <location>
        <begin position="459"/>
        <end position="468"/>
    </location>
</feature>
<feature type="strand" evidence="7">
    <location>
        <begin position="472"/>
        <end position="477"/>
    </location>
</feature>
<feature type="helix" evidence="7">
    <location>
        <begin position="482"/>
        <end position="496"/>
    </location>
</feature>